<comment type="function">
    <text evidence="4 6">Cytoskeletal linker protein, which is essential for attachment of the centrosome to the nucleus (PubMed:14697201). Required for dynein localization to the nuclear envelope (PubMed:14697201). Forms a LINC (LInker of Nucleoskeleton and Cytoskeleton) complex together with unc-84, that may be involved in DNA damage repair (PubMed:27956467).</text>
</comment>
<comment type="subunit">
    <text evidence="4 5 6">Homodimer (PubMed:14697201). Interacts with the dynein subunit dli-1 via its N-terminus (PubMed:14697201). May interact with microtubules (PubMed:14697201). Interacts with sut-2 (PubMed:19273536). Interacts (via C-terminus) with unc-84 (via C-terminus); the interaction is direct (PubMed:27956467).</text>
</comment>
<comment type="interaction">
    <interactant intactId="EBI-1570263">
        <id>Q23529</id>
    </interactant>
    <interactant intactId="EBI-11465218">
        <id>G5ED30</id>
        <label>vab-9</label>
    </interactant>
    <organismsDiffer>false</organismsDiffer>
    <experiments>3</experiments>
</comment>
<comment type="subcellular location">
    <subcellularLocation>
        <location evidence="4">Nucleus membrane</location>
    </subcellularLocation>
    <subcellularLocation>
        <location evidence="4">Cytoplasm</location>
        <location evidence="4">Cytoskeleton</location>
        <location evidence="4">Microtubule organizing center</location>
        <location evidence="4">Centrosome</location>
    </subcellularLocation>
    <subcellularLocation>
        <location evidence="4">Cytoplasm</location>
        <location evidence="4">Cytoskeleton</location>
    </subcellularLocation>
    <text>Localizes to the minus end of microtubules, proximal to the centrosome. Centrosomal localization requires sun-1 and microtubules.</text>
</comment>
<comment type="alternative products">
    <event type="alternative splicing"/>
    <isoform>
        <id>Q23529-3</id>
        <name evidence="10">b</name>
        <name evidence="7">ZYG-12B</name>
        <sequence type="displayed"/>
    </isoform>
    <isoform>
        <id>Q23529-2</id>
        <name evidence="9">a</name>
        <sequence type="described" ref="VSP_009344 VSP_009345"/>
    </isoform>
    <isoform>
        <id>Q23529-1</id>
        <name evidence="11">c</name>
        <name evidence="7">ZYG-12C</name>
        <sequence type="described" ref="VSP_009343"/>
    </isoform>
    <isoform>
        <id>Q23529-4</id>
        <name evidence="12">d</name>
        <name evidence="7">ZYG-12A</name>
        <sequence type="described" ref="VSP_020988 VSP_009344 VSP_009345"/>
    </isoform>
</comment>
<comment type="tissue specificity">
    <text evidence="4">Expressed in the syncytial gonad, oocytes, and in all cells during the development of the early embryo.</text>
</comment>
<comment type="induction">
    <text evidence="6">Induced by DNA-damage.</text>
</comment>
<comment type="domain">
    <text>The large coiled coil domain is required for homodimerization.</text>
</comment>
<comment type="disruption phenotype">
    <text evidence="6">RNAi-mediated knockdown results in a reduced number of viable progeny following incubation with the DNA cross-linking agent cisplatin.</text>
</comment>
<comment type="miscellaneous">
    <text>In contrast to isoform a and isoform d, isoform b and isoform c contain a potential transmembrane domain which may mediate insertion into the nuclear membrane.</text>
</comment>
<comment type="miscellaneous">
    <molecule>Isoform a</molecule>
    <text evidence="8">Does not contain a transmembrane domain.</text>
</comment>
<comment type="miscellaneous">
    <molecule>Isoform d</molecule>
    <text evidence="8">Does not contain a transmembrane domain.</text>
</comment>
<comment type="similarity">
    <text evidence="8">Belongs to the hook family.</text>
</comment>
<name>HOOK_CAEEL</name>
<reference key="1">
    <citation type="journal article" date="2003" name="Cell">
        <title>The C. elegans hook protein, ZYG-12, mediates the essential attachment between the centrosome and nucleus.</title>
        <authorList>
            <person name="Malone C.J."/>
            <person name="Misner L."/>
            <person name="Le Bot N."/>
            <person name="Tsai M.-C."/>
            <person name="Campbell J.M."/>
            <person name="Ahringer J."/>
            <person name="White J.G."/>
        </authorList>
    </citation>
    <scope>NUCLEOTIDE SEQUENCE [MRNA] (ISOFORM D)</scope>
    <scope>NUCLEOTIDE SEQUENCE [MRNA] OF 653-777 (ISOFORMS B AND C)</scope>
    <scope>FUNCTION</scope>
    <scope>SUBCELLULAR LOCATION</scope>
    <scope>TISSUE SPECIFICITY</scope>
    <scope>INTERACTION WITH DLI-1</scope>
    <scope>HOMODIMERIZATION</scope>
    <scope>MUTAGENESIS OF GLN-44 AND GLN-367</scope>
</reference>
<reference key="2">
    <citation type="journal article" date="1998" name="Science">
        <title>Genome sequence of the nematode C. elegans: a platform for investigating biology.</title>
        <authorList>
            <consortium name="The C. elegans sequencing consortium"/>
        </authorList>
    </citation>
    <scope>NUCLEOTIDE SEQUENCE [LARGE SCALE GENOMIC DNA]</scope>
    <source>
        <strain>Bristol N2</strain>
    </source>
</reference>
<reference key="3">
    <citation type="journal article" date="2009" name="Hum. Mol. Genet.">
        <title>SUT-2 potentiates tau-induced neurotoxicity in Caenorhabditis elegans.</title>
        <authorList>
            <person name="Guthrie C.R."/>
            <person name="Schellenberg G.D."/>
            <person name="Kraemer B.C."/>
        </authorList>
    </citation>
    <scope>INTERACTION WITH SUT-2</scope>
</reference>
<reference key="4">
    <citation type="journal article" date="2016" name="J. Cell Biol.">
        <title>LINC complexes promote homologous recombination in part through inhibition of nonhomologous end joining.</title>
        <authorList>
            <person name="Lawrence K.S."/>
            <person name="Tapley E.C."/>
            <person name="Cruz V.E."/>
            <person name="Li Q."/>
            <person name="Aung K."/>
            <person name="Hart K.C."/>
            <person name="Schwartz T.U."/>
            <person name="Starr D.A."/>
            <person name="Engebrecht J."/>
        </authorList>
    </citation>
    <scope>FUNCTION</scope>
    <scope>INTERACTION WITH UNC-84</scope>
    <scope>INDUCTION BY DNA-DAMAGE</scope>
    <scope>DISRUPTION PHENOTYPE</scope>
</reference>
<keyword id="KW-0025">Alternative splicing</keyword>
<keyword id="KW-0175">Coiled coil</keyword>
<keyword id="KW-0963">Cytoplasm</keyword>
<keyword id="KW-0206">Cytoskeleton</keyword>
<keyword id="KW-0472">Membrane</keyword>
<keyword id="KW-0493">Microtubule</keyword>
<keyword id="KW-0539">Nucleus</keyword>
<keyword id="KW-1185">Reference proteome</keyword>
<keyword id="KW-0812">Transmembrane</keyword>
<keyword id="KW-1133">Transmembrane helix</keyword>
<protein>
    <recommendedName>
        <fullName>Zygote defective protein 12</fullName>
    </recommendedName>
</protein>
<evidence type="ECO:0000255" key="1"/>
<evidence type="ECO:0000255" key="2">
    <source>
        <dbReference type="PROSITE-ProRule" id="PRU00044"/>
    </source>
</evidence>
<evidence type="ECO:0000256" key="3">
    <source>
        <dbReference type="SAM" id="MobiDB-lite"/>
    </source>
</evidence>
<evidence type="ECO:0000269" key="4">
    <source>
    </source>
</evidence>
<evidence type="ECO:0000269" key="5">
    <source>
    </source>
</evidence>
<evidence type="ECO:0000269" key="6">
    <source>
    </source>
</evidence>
<evidence type="ECO:0000303" key="7">
    <source>
    </source>
</evidence>
<evidence type="ECO:0000305" key="8"/>
<evidence type="ECO:0000312" key="9">
    <source>
        <dbReference type="WormBase" id="ZK546.1a"/>
    </source>
</evidence>
<evidence type="ECO:0000312" key="10">
    <source>
        <dbReference type="WormBase" id="ZK546.1b"/>
    </source>
</evidence>
<evidence type="ECO:0000312" key="11">
    <source>
        <dbReference type="WormBase" id="ZK546.1c"/>
    </source>
</evidence>
<evidence type="ECO:0000312" key="12">
    <source>
        <dbReference type="WormBase" id="ZK546.1d"/>
    </source>
</evidence>
<organism>
    <name type="scientific">Caenorhabditis elegans</name>
    <dbReference type="NCBI Taxonomy" id="6239"/>
    <lineage>
        <taxon>Eukaryota</taxon>
        <taxon>Metazoa</taxon>
        <taxon>Ecdysozoa</taxon>
        <taxon>Nematoda</taxon>
        <taxon>Chromadorea</taxon>
        <taxon>Rhabditida</taxon>
        <taxon>Rhabditina</taxon>
        <taxon>Rhabditomorpha</taxon>
        <taxon>Rhabditoidea</taxon>
        <taxon>Rhabditidae</taxon>
        <taxon>Peloderinae</taxon>
        <taxon>Caenorhabditis</taxon>
    </lineage>
</organism>
<accession>Q23529</accession>
<accession>Q2V4T6</accession>
<accession>Q7JPD4</accession>
<feature type="chain" id="PRO_0000219201" description="Zygote defective protein 12">
    <location>
        <begin position="1"/>
        <end position="777"/>
    </location>
</feature>
<feature type="transmembrane region" description="Helical" evidence="1">
    <location>
        <begin position="747"/>
        <end position="767"/>
    </location>
</feature>
<feature type="domain" description="Calponin-homology (CH)" evidence="2">
    <location>
        <begin position="44"/>
        <end position="169"/>
    </location>
</feature>
<feature type="region of interest" description="Interaction with dli-1" evidence="4">
    <location>
        <begin position="1"/>
        <end position="234"/>
    </location>
</feature>
<feature type="region of interest" description="Disordered" evidence="3">
    <location>
        <begin position="1"/>
        <end position="36"/>
    </location>
</feature>
<feature type="region of interest" description="Disordered" evidence="3">
    <location>
        <begin position="217"/>
        <end position="242"/>
    </location>
</feature>
<feature type="region of interest" description="Disordered" evidence="3">
    <location>
        <begin position="273"/>
        <end position="292"/>
    </location>
</feature>
<feature type="region of interest" description="Interaction with unc-84" evidence="6">
    <location>
        <begin position="749"/>
        <end position="777"/>
    </location>
</feature>
<feature type="coiled-coil region" evidence="1">
    <location>
        <begin position="236"/>
        <end position="399"/>
    </location>
</feature>
<feature type="coiled-coil region" evidence="1">
    <location>
        <begin position="425"/>
        <end position="688"/>
    </location>
</feature>
<feature type="compositionally biased region" description="Basic and acidic residues" evidence="3">
    <location>
        <begin position="1"/>
        <end position="10"/>
    </location>
</feature>
<feature type="compositionally biased region" description="Basic and acidic residues" evidence="3">
    <location>
        <begin position="18"/>
        <end position="36"/>
    </location>
</feature>
<feature type="compositionally biased region" description="Low complexity" evidence="3">
    <location>
        <begin position="218"/>
        <end position="235"/>
    </location>
</feature>
<feature type="compositionally biased region" description="Polar residues" evidence="3">
    <location>
        <begin position="273"/>
        <end position="288"/>
    </location>
</feature>
<feature type="splice variant" id="VSP_020988" description="In isoform d." evidence="7">
    <original>EPFS</original>
    <variation>D</variation>
    <location>
        <begin position="498"/>
        <end position="501"/>
    </location>
</feature>
<feature type="splice variant" id="VSP_009343" description="In isoform c." evidence="7">
    <location>
        <begin position="734"/>
        <end position="749"/>
    </location>
</feature>
<feature type="splice variant" id="VSP_009344" description="In isoform a and isoform d." evidence="7">
    <original>SL</original>
    <variation>FS</variation>
    <location>
        <begin position="735"/>
        <end position="736"/>
    </location>
</feature>
<feature type="splice variant" id="VSP_009345" description="In isoform a and isoform d." evidence="7">
    <location>
        <begin position="737"/>
        <end position="777"/>
    </location>
</feature>
<feature type="mutagenesis site" description="In ct350; temperature-sensitive allele. Induces aberrant centrosome attachment and nuclear positioning when transferred to nonpermissive temperature." evidence="4">
    <original>Q</original>
    <variation>P</variation>
    <location>
        <position position="44"/>
    </location>
</feature>
<feature type="mutagenesis site" description="In or577; temperature-sensitive allele. Induces aberrant centrosome attachment and nuclear positioning when transferred to nonpermissive temperature. Abolishes homodimerization." evidence="4">
    <original>Q</original>
    <variation>P</variation>
    <location>
        <position position="367"/>
    </location>
</feature>
<gene>
    <name evidence="10" type="primary">zyg-12</name>
    <name evidence="10" type="synonym">ber-1</name>
    <name evidence="10" type="ORF">ZK546.1</name>
</gene>
<proteinExistence type="evidence at protein level"/>
<sequence length="777" mass="88714">MLDLTNKESESSDNGNSKYEDSIDGREVGTSKPFKEERSLEDLQADLADMAVWMEGLDATKLPLNDPQLLCNGRAFSEVLHNVDKNFFTDGWLETMPENRTTNIMVFRSCTRKLWRKMFDYVNHINRTVVSSRWTDIHERIDGIYESDLPAMVNLGMAVVTLAHIGKNAKRFVDYSKALTSTHKSMMSNVAKMVTTVIDEMPENPCFHEISELHGSQSELNSLSESSGKLNGNGSSERRSNADQILVDAELEIERLRTETENQRKEIERLTKSFETAQHDMSSNSESGDISILEKQNEELRQKRRELEEKNLELDAAVDQFKGIVFELTNENDVLRRSDKERQRLQTVLDAAQSDLDEWKTVANQYQKEAELSKQQDKEIKELLSQNKALKSRLDHHVKSATLEDANKNGIAQLRTQVGGLTALNTELKASLDSKKRCVEQLEIQLIQHKEKVKELEDRKDELIEERNRLENQLIFKEAVTPRSLHESMFEAGNLSFEPFSEKNTLPLEIENKRLTERIQELESLEPLKGELITLKSKNGVLEEEKLFATKQIEELQQQIEDLQENLLKNQEHASGDVVGLKIQLEKAEVEAQQMREAKMRAETNQAQVDEILKKRTAELEVNATALQKAKAVIDELEYNSRPVSEDSMTSVQAFKEMKEENEKLRQKVEKLEIELNTVTQGFEQENRLLTSASHQQVLNRSIDEVMSMRAHAGSEEPQTLLDTQKMSGALPWRSLASETRRELPTAMASILVLGFLVFIAWMFININSALNAPPNA</sequence>
<dbReference type="EMBL" id="AY487140">
    <property type="protein sequence ID" value="AAR32790.1"/>
    <property type="molecule type" value="mRNA"/>
</dbReference>
<dbReference type="EMBL" id="AY487141">
    <property type="protein sequence ID" value="AAR32791.1"/>
    <property type="molecule type" value="mRNA"/>
</dbReference>
<dbReference type="EMBL" id="AY487142">
    <property type="protein sequence ID" value="AAR32792.1"/>
    <property type="molecule type" value="mRNA"/>
</dbReference>
<dbReference type="EMBL" id="BX284602">
    <property type="protein sequence ID" value="CCD73211.1"/>
    <property type="molecule type" value="Genomic_DNA"/>
</dbReference>
<dbReference type="EMBL" id="BX284602">
    <property type="protein sequence ID" value="CCD73212.1"/>
    <property type="molecule type" value="Genomic_DNA"/>
</dbReference>
<dbReference type="EMBL" id="BX284602">
    <property type="protein sequence ID" value="CCD73213.1"/>
    <property type="molecule type" value="Genomic_DNA"/>
</dbReference>
<dbReference type="EMBL" id="BX284602">
    <property type="protein sequence ID" value="CCD73214.1"/>
    <property type="molecule type" value="Genomic_DNA"/>
</dbReference>
<dbReference type="PIR" id="T27907">
    <property type="entry name" value="T27907"/>
</dbReference>
<dbReference type="RefSeq" id="NP_001293518.1">
    <property type="nucleotide sequence ID" value="NM_001306589.1"/>
</dbReference>
<dbReference type="RefSeq" id="NP_001293519.1">
    <molecule id="Q23529-3"/>
    <property type="nucleotide sequence ID" value="NM_001306590.3"/>
</dbReference>
<dbReference type="RefSeq" id="NP_001293520.1">
    <molecule id="Q23529-1"/>
    <property type="nucleotide sequence ID" value="NM_001306591.3"/>
</dbReference>
<dbReference type="RefSeq" id="NP_001293521.1">
    <molecule id="Q23529-4"/>
    <property type="nucleotide sequence ID" value="NM_001306592.3"/>
</dbReference>
<dbReference type="RefSeq" id="NP_001360114.1">
    <molecule id="Q23529-2"/>
    <property type="nucleotide sequence ID" value="NM_001373710.2"/>
</dbReference>
<dbReference type="SMR" id="Q23529"/>
<dbReference type="FunCoup" id="Q23529">
    <property type="interactions" value="1914"/>
</dbReference>
<dbReference type="IntAct" id="Q23529">
    <property type="interactions" value="6"/>
</dbReference>
<dbReference type="STRING" id="6239.ZK546.1b.1"/>
<dbReference type="PaxDb" id="6239-ZK546.1b"/>
<dbReference type="PeptideAtlas" id="Q23529"/>
<dbReference type="EnsemblMetazoa" id="ZK546.1a.1">
    <molecule id="Q23529-2"/>
    <property type="protein sequence ID" value="ZK546.1a.1"/>
    <property type="gene ID" value="WBGene00006997"/>
</dbReference>
<dbReference type="EnsemblMetazoa" id="ZK546.1a.2">
    <molecule id="Q23529-2"/>
    <property type="protein sequence ID" value="ZK546.1a.2"/>
    <property type="gene ID" value="WBGene00006997"/>
</dbReference>
<dbReference type="EnsemblMetazoa" id="ZK546.1a.3">
    <molecule id="Q23529-2"/>
    <property type="protein sequence ID" value="ZK546.1a.3"/>
    <property type="gene ID" value="WBGene00006997"/>
</dbReference>
<dbReference type="EnsemblMetazoa" id="ZK546.1b.1">
    <molecule id="Q23529-3"/>
    <property type="protein sequence ID" value="ZK546.1b.1"/>
    <property type="gene ID" value="WBGene00006997"/>
</dbReference>
<dbReference type="EnsemblMetazoa" id="ZK546.1c.1">
    <molecule id="Q23529-1"/>
    <property type="protein sequence ID" value="ZK546.1c.1"/>
    <property type="gene ID" value="WBGene00006997"/>
</dbReference>
<dbReference type="EnsemblMetazoa" id="ZK546.1d.1">
    <molecule id="Q23529-4"/>
    <property type="protein sequence ID" value="ZK546.1d.1"/>
    <property type="gene ID" value="WBGene00006997"/>
</dbReference>
<dbReference type="EnsemblMetazoa" id="ZK546.1d.2">
    <molecule id="Q23529-4"/>
    <property type="protein sequence ID" value="ZK546.1d.2"/>
    <property type="gene ID" value="WBGene00006997"/>
</dbReference>
<dbReference type="EnsemblMetazoa" id="ZK546.1d.3">
    <molecule id="Q23529-4"/>
    <property type="protein sequence ID" value="ZK546.1d.3"/>
    <property type="gene ID" value="WBGene00006997"/>
</dbReference>
<dbReference type="GeneID" id="24105291"/>
<dbReference type="KEGG" id="cel:CELE_ZK546.1"/>
<dbReference type="UCSC" id="ZK546.1a">
    <molecule id="Q23529-1"/>
    <property type="organism name" value="c. elegans"/>
</dbReference>
<dbReference type="AGR" id="WB:WBGene00006997"/>
<dbReference type="CTD" id="24105291"/>
<dbReference type="WormBase" id="ZK546.1a">
    <molecule id="Q23529-2"/>
    <property type="protein sequence ID" value="CE32088"/>
    <property type="gene ID" value="WBGene00006997"/>
    <property type="gene designation" value="zyg-12"/>
</dbReference>
<dbReference type="WormBase" id="ZK546.1b">
    <molecule id="Q23529-3"/>
    <property type="protein sequence ID" value="CE28524"/>
    <property type="gene ID" value="WBGene00006997"/>
    <property type="gene designation" value="zyg-12"/>
</dbReference>
<dbReference type="WormBase" id="ZK546.1c">
    <molecule id="Q23529-1"/>
    <property type="protein sequence ID" value="CE36518"/>
    <property type="gene ID" value="WBGene00006997"/>
    <property type="gene designation" value="zyg-12"/>
</dbReference>
<dbReference type="WormBase" id="ZK546.1d">
    <molecule id="Q23529-4"/>
    <property type="protein sequence ID" value="CE39461"/>
    <property type="gene ID" value="WBGene00006997"/>
    <property type="gene designation" value="zyg-12"/>
</dbReference>
<dbReference type="eggNOG" id="ENOG502QTJ1">
    <property type="taxonomic scope" value="Eukaryota"/>
</dbReference>
<dbReference type="GeneTree" id="ENSGT00940000167690"/>
<dbReference type="InParanoid" id="Q23529"/>
<dbReference type="OMA" id="WRAKANQ"/>
<dbReference type="OrthoDB" id="49395at2759"/>
<dbReference type="PhylomeDB" id="Q23529"/>
<dbReference type="CD-CODE" id="1E117272">
    <property type="entry name" value="Centrosome"/>
</dbReference>
<dbReference type="PRO" id="PR:Q23529"/>
<dbReference type="Proteomes" id="UP000001940">
    <property type="component" value="Chromosome II"/>
</dbReference>
<dbReference type="Bgee" id="WBGene00006997">
    <property type="expression patterns" value="Expressed in embryo and 4 other cell types or tissues"/>
</dbReference>
<dbReference type="GO" id="GO:0005813">
    <property type="term" value="C:centrosome"/>
    <property type="evidence" value="ECO:0000314"/>
    <property type="project" value="WormBase"/>
</dbReference>
<dbReference type="GO" id="GO:0005737">
    <property type="term" value="C:cytoplasm"/>
    <property type="evidence" value="ECO:0000318"/>
    <property type="project" value="GO_Central"/>
</dbReference>
<dbReference type="GO" id="GO:0005874">
    <property type="term" value="C:microtubule"/>
    <property type="evidence" value="ECO:0007669"/>
    <property type="project" value="UniProtKB-KW"/>
</dbReference>
<dbReference type="GO" id="GO:0005635">
    <property type="term" value="C:nuclear envelope"/>
    <property type="evidence" value="ECO:0000314"/>
    <property type="project" value="WormBase"/>
</dbReference>
<dbReference type="GO" id="GO:0031965">
    <property type="term" value="C:nuclear membrane"/>
    <property type="evidence" value="ECO:0007669"/>
    <property type="project" value="UniProtKB-SubCell"/>
</dbReference>
<dbReference type="GO" id="GO:0051959">
    <property type="term" value="F:dynein light intermediate chain binding"/>
    <property type="evidence" value="ECO:0000353"/>
    <property type="project" value="WormBase"/>
</dbReference>
<dbReference type="GO" id="GO:0008017">
    <property type="term" value="F:microtubule binding"/>
    <property type="evidence" value="ECO:0000318"/>
    <property type="project" value="GO_Central"/>
</dbReference>
<dbReference type="GO" id="GO:0051642">
    <property type="term" value="P:centrosome localization"/>
    <property type="evidence" value="ECO:0000315"/>
    <property type="project" value="WormBase"/>
</dbReference>
<dbReference type="GO" id="GO:0007059">
    <property type="term" value="P:chromosome segregation"/>
    <property type="evidence" value="ECO:0000315"/>
    <property type="project" value="WormBase"/>
</dbReference>
<dbReference type="GO" id="GO:0031122">
    <property type="term" value="P:cytoplasmic microtubule organization"/>
    <property type="evidence" value="ECO:0000318"/>
    <property type="project" value="GO_Central"/>
</dbReference>
<dbReference type="GO" id="GO:0030705">
    <property type="term" value="P:cytoskeleton-dependent intracellular transport"/>
    <property type="evidence" value="ECO:0000318"/>
    <property type="project" value="GO_Central"/>
</dbReference>
<dbReference type="GO" id="GO:0009792">
    <property type="term" value="P:embryo development ending in birth or egg hatching"/>
    <property type="evidence" value="ECO:0000315"/>
    <property type="project" value="WormBase"/>
</dbReference>
<dbReference type="GO" id="GO:0051647">
    <property type="term" value="P:nucleus localization"/>
    <property type="evidence" value="ECO:0000315"/>
    <property type="project" value="WormBase"/>
</dbReference>
<dbReference type="GO" id="GO:0035046">
    <property type="term" value="P:pronuclear migration"/>
    <property type="evidence" value="ECO:0000315"/>
    <property type="project" value="WormBase"/>
</dbReference>
<dbReference type="Gene3D" id="1.10.418.10">
    <property type="entry name" value="Calponin-like domain"/>
    <property type="match status" value="1"/>
</dbReference>
<dbReference type="InterPro" id="IPR001715">
    <property type="entry name" value="CH_dom"/>
</dbReference>
<dbReference type="InterPro" id="IPR036872">
    <property type="entry name" value="CH_dom_sf"/>
</dbReference>
<dbReference type="InterPro" id="IPR043936">
    <property type="entry name" value="HOOK_N"/>
</dbReference>
<dbReference type="PANTHER" id="PTHR18947">
    <property type="entry name" value="HOOK PROTEINS"/>
    <property type="match status" value="1"/>
</dbReference>
<dbReference type="PANTHER" id="PTHR18947:SF39">
    <property type="entry name" value="PROTEIN HOOK"/>
    <property type="match status" value="1"/>
</dbReference>
<dbReference type="Pfam" id="PF19047">
    <property type="entry name" value="HOOK_N"/>
    <property type="match status" value="1"/>
</dbReference>
<dbReference type="SUPFAM" id="SSF116907">
    <property type="entry name" value="Hook domain"/>
    <property type="match status" value="1"/>
</dbReference>
<dbReference type="PROSITE" id="PS50021">
    <property type="entry name" value="CH"/>
    <property type="match status" value="1"/>
</dbReference>